<name>LOLB_SHIF8</name>
<accession>Q0T5I6</accession>
<gene>
    <name evidence="1" type="primary">lolB</name>
    <name type="ordered locus">SFV_1223</name>
</gene>
<protein>
    <recommendedName>
        <fullName evidence="1">Outer-membrane lipoprotein LolB</fullName>
    </recommendedName>
</protein>
<reference key="1">
    <citation type="journal article" date="2006" name="BMC Genomics">
        <title>Complete genome sequence of Shigella flexneri 5b and comparison with Shigella flexneri 2a.</title>
        <authorList>
            <person name="Nie H."/>
            <person name="Yang F."/>
            <person name="Zhang X."/>
            <person name="Yang J."/>
            <person name="Chen L."/>
            <person name="Wang J."/>
            <person name="Xiong Z."/>
            <person name="Peng J."/>
            <person name="Sun L."/>
            <person name="Dong J."/>
            <person name="Xue Y."/>
            <person name="Xu X."/>
            <person name="Chen S."/>
            <person name="Yao Z."/>
            <person name="Shen Y."/>
            <person name="Jin Q."/>
        </authorList>
    </citation>
    <scope>NUCLEOTIDE SEQUENCE [LARGE SCALE GENOMIC DNA]</scope>
    <source>
        <strain>8401</strain>
    </source>
</reference>
<dbReference type="EMBL" id="CP000266">
    <property type="protein sequence ID" value="ABF03429.1"/>
    <property type="molecule type" value="Genomic_DNA"/>
</dbReference>
<dbReference type="RefSeq" id="WP_001130692.1">
    <property type="nucleotide sequence ID" value="NC_008258.1"/>
</dbReference>
<dbReference type="SMR" id="Q0T5I6"/>
<dbReference type="GeneID" id="93775274"/>
<dbReference type="KEGG" id="sfv:SFV_1223"/>
<dbReference type="HOGENOM" id="CLU_092816_1_1_6"/>
<dbReference type="Proteomes" id="UP000000659">
    <property type="component" value="Chromosome"/>
</dbReference>
<dbReference type="GO" id="GO:0009279">
    <property type="term" value="C:cell outer membrane"/>
    <property type="evidence" value="ECO:0007669"/>
    <property type="project" value="UniProtKB-SubCell"/>
</dbReference>
<dbReference type="GO" id="GO:0044874">
    <property type="term" value="P:lipoprotein localization to outer membrane"/>
    <property type="evidence" value="ECO:0007669"/>
    <property type="project" value="UniProtKB-UniRule"/>
</dbReference>
<dbReference type="GO" id="GO:0015031">
    <property type="term" value="P:protein transport"/>
    <property type="evidence" value="ECO:0007669"/>
    <property type="project" value="UniProtKB-KW"/>
</dbReference>
<dbReference type="CDD" id="cd16326">
    <property type="entry name" value="LolB"/>
    <property type="match status" value="1"/>
</dbReference>
<dbReference type="FunFam" id="2.50.20.10:FF:000002">
    <property type="entry name" value="Outer-membrane lipoprotein LolB"/>
    <property type="match status" value="1"/>
</dbReference>
<dbReference type="Gene3D" id="2.50.20.10">
    <property type="entry name" value="Lipoprotein localisation LolA/LolB/LppX"/>
    <property type="match status" value="1"/>
</dbReference>
<dbReference type="HAMAP" id="MF_00233">
    <property type="entry name" value="LolB"/>
    <property type="match status" value="1"/>
</dbReference>
<dbReference type="InterPro" id="IPR029046">
    <property type="entry name" value="LolA/LolB/LppX"/>
</dbReference>
<dbReference type="InterPro" id="IPR004565">
    <property type="entry name" value="OM_lipoprot_LolB"/>
</dbReference>
<dbReference type="NCBIfam" id="TIGR00548">
    <property type="entry name" value="lolB"/>
    <property type="match status" value="1"/>
</dbReference>
<dbReference type="Pfam" id="PF03550">
    <property type="entry name" value="LolB"/>
    <property type="match status" value="1"/>
</dbReference>
<dbReference type="SUPFAM" id="SSF89392">
    <property type="entry name" value="Prokaryotic lipoproteins and lipoprotein localization factors"/>
    <property type="match status" value="1"/>
</dbReference>
<dbReference type="PROSITE" id="PS51257">
    <property type="entry name" value="PROKAR_LIPOPROTEIN"/>
    <property type="match status" value="1"/>
</dbReference>
<feature type="signal peptide" evidence="1">
    <location>
        <begin position="1"/>
        <end position="21"/>
    </location>
</feature>
<feature type="chain" id="PRO_1000021687" description="Outer-membrane lipoprotein LolB">
    <location>
        <begin position="22"/>
        <end position="207"/>
    </location>
</feature>
<feature type="lipid moiety-binding region" description="N-palmitoyl cysteine" evidence="1">
    <location>
        <position position="22"/>
    </location>
</feature>
<feature type="lipid moiety-binding region" description="S-diacylglycerol cysteine" evidence="1">
    <location>
        <position position="22"/>
    </location>
</feature>
<proteinExistence type="inferred from homology"/>
<keyword id="KW-0998">Cell outer membrane</keyword>
<keyword id="KW-0143">Chaperone</keyword>
<keyword id="KW-0449">Lipoprotein</keyword>
<keyword id="KW-0472">Membrane</keyword>
<keyword id="KW-0564">Palmitate</keyword>
<keyword id="KW-0653">Protein transport</keyword>
<keyword id="KW-0732">Signal</keyword>
<keyword id="KW-0813">Transport</keyword>
<sequence length="207" mass="23551">MPLPDFRLIRLLPLAALVLTACSVTTPKGPGKSPDSPQWRQHQQDVRNLNQYQTRGAFAYISDQQKVYARFFWQQTGQDRYRLLLTNPLGSTELELNAQPGNVQLVDNKGQRYTADDAEEMIGKLTGMPIPLNSLRQWILGLPGDATDYKLDDQYRLSEITYSQNGKNWKVVYGGYDTKTQPAMPANMELTDGGQRIKLKMDNWIVK</sequence>
<comment type="function">
    <text evidence="1">Plays a critical role in the incorporation of lipoproteins in the outer membrane after they are released by the LolA protein.</text>
</comment>
<comment type="subunit">
    <text evidence="1">Monomer.</text>
</comment>
<comment type="subcellular location">
    <subcellularLocation>
        <location evidence="1">Cell outer membrane</location>
        <topology evidence="1">Lipid-anchor</topology>
    </subcellularLocation>
</comment>
<comment type="similarity">
    <text evidence="1">Belongs to the LolB family.</text>
</comment>
<organism>
    <name type="scientific">Shigella flexneri serotype 5b (strain 8401)</name>
    <dbReference type="NCBI Taxonomy" id="373384"/>
    <lineage>
        <taxon>Bacteria</taxon>
        <taxon>Pseudomonadati</taxon>
        <taxon>Pseudomonadota</taxon>
        <taxon>Gammaproteobacteria</taxon>
        <taxon>Enterobacterales</taxon>
        <taxon>Enterobacteriaceae</taxon>
        <taxon>Shigella</taxon>
    </lineage>
</organism>
<evidence type="ECO:0000255" key="1">
    <source>
        <dbReference type="HAMAP-Rule" id="MF_00233"/>
    </source>
</evidence>